<name>ENO_BORHD</name>
<keyword id="KW-0963">Cytoplasm</keyword>
<keyword id="KW-0324">Glycolysis</keyword>
<keyword id="KW-0456">Lyase</keyword>
<keyword id="KW-0460">Magnesium</keyword>
<keyword id="KW-0479">Metal-binding</keyword>
<keyword id="KW-0964">Secreted</keyword>
<evidence type="ECO:0000255" key="1">
    <source>
        <dbReference type="HAMAP-Rule" id="MF_00318"/>
    </source>
</evidence>
<reference key="1">
    <citation type="submission" date="2004-12" db="EMBL/GenBank/DDBJ databases">
        <title>The genome sequence of Borrelia hermsii and Borrelia turicatae: comparative analysis of two agents of endemic N. America relapsing fever.</title>
        <authorList>
            <person name="Porcella S.F."/>
            <person name="Raffel S.J."/>
            <person name="Schrumpf M.E."/>
            <person name="Montgomery B."/>
            <person name="Smith T."/>
            <person name="Schwan T.G."/>
        </authorList>
    </citation>
    <scope>NUCLEOTIDE SEQUENCE [LARGE SCALE GENOMIC DNA]</scope>
    <source>
        <strain>HS1 / DAH</strain>
    </source>
</reference>
<organism>
    <name type="scientific">Borrelia hermsii (strain HS1 / DAH)</name>
    <dbReference type="NCBI Taxonomy" id="314723"/>
    <lineage>
        <taxon>Bacteria</taxon>
        <taxon>Pseudomonadati</taxon>
        <taxon>Spirochaetota</taxon>
        <taxon>Spirochaetia</taxon>
        <taxon>Spirochaetales</taxon>
        <taxon>Borreliaceae</taxon>
        <taxon>Borrelia</taxon>
    </lineage>
</organism>
<accession>B2S044</accession>
<gene>
    <name evidence="1" type="primary">eno</name>
    <name type="ordered locus">BH0337</name>
</gene>
<dbReference type="EC" id="4.2.1.11" evidence="1"/>
<dbReference type="EMBL" id="CP000048">
    <property type="protein sequence ID" value="AAX16850.1"/>
    <property type="molecule type" value="Genomic_DNA"/>
</dbReference>
<dbReference type="RefSeq" id="WP_012422107.1">
    <property type="nucleotide sequence ID" value="NZ_CP073136.1"/>
</dbReference>
<dbReference type="SMR" id="B2S044"/>
<dbReference type="GeneID" id="71843147"/>
<dbReference type="KEGG" id="bhr:BH0337"/>
<dbReference type="HOGENOM" id="CLU_031223_2_1_12"/>
<dbReference type="UniPathway" id="UPA00109">
    <property type="reaction ID" value="UER00187"/>
</dbReference>
<dbReference type="Proteomes" id="UP000008834">
    <property type="component" value="Chromosome"/>
</dbReference>
<dbReference type="GO" id="GO:0009986">
    <property type="term" value="C:cell surface"/>
    <property type="evidence" value="ECO:0007669"/>
    <property type="project" value="UniProtKB-SubCell"/>
</dbReference>
<dbReference type="GO" id="GO:0005576">
    <property type="term" value="C:extracellular region"/>
    <property type="evidence" value="ECO:0007669"/>
    <property type="project" value="UniProtKB-SubCell"/>
</dbReference>
<dbReference type="GO" id="GO:0000015">
    <property type="term" value="C:phosphopyruvate hydratase complex"/>
    <property type="evidence" value="ECO:0007669"/>
    <property type="project" value="InterPro"/>
</dbReference>
<dbReference type="GO" id="GO:0000287">
    <property type="term" value="F:magnesium ion binding"/>
    <property type="evidence" value="ECO:0007669"/>
    <property type="project" value="UniProtKB-UniRule"/>
</dbReference>
<dbReference type="GO" id="GO:0004634">
    <property type="term" value="F:phosphopyruvate hydratase activity"/>
    <property type="evidence" value="ECO:0007669"/>
    <property type="project" value="UniProtKB-UniRule"/>
</dbReference>
<dbReference type="GO" id="GO:0006096">
    <property type="term" value="P:glycolytic process"/>
    <property type="evidence" value="ECO:0007669"/>
    <property type="project" value="UniProtKB-UniRule"/>
</dbReference>
<dbReference type="CDD" id="cd03313">
    <property type="entry name" value="enolase"/>
    <property type="match status" value="1"/>
</dbReference>
<dbReference type="FunFam" id="3.20.20.120:FF:000001">
    <property type="entry name" value="Enolase"/>
    <property type="match status" value="1"/>
</dbReference>
<dbReference type="FunFam" id="3.30.390.10:FF:000001">
    <property type="entry name" value="Enolase"/>
    <property type="match status" value="1"/>
</dbReference>
<dbReference type="Gene3D" id="3.20.20.120">
    <property type="entry name" value="Enolase-like C-terminal domain"/>
    <property type="match status" value="1"/>
</dbReference>
<dbReference type="Gene3D" id="3.30.390.10">
    <property type="entry name" value="Enolase-like, N-terminal domain"/>
    <property type="match status" value="1"/>
</dbReference>
<dbReference type="HAMAP" id="MF_00318">
    <property type="entry name" value="Enolase"/>
    <property type="match status" value="1"/>
</dbReference>
<dbReference type="InterPro" id="IPR000941">
    <property type="entry name" value="Enolase"/>
</dbReference>
<dbReference type="InterPro" id="IPR036849">
    <property type="entry name" value="Enolase-like_C_sf"/>
</dbReference>
<dbReference type="InterPro" id="IPR029017">
    <property type="entry name" value="Enolase-like_N"/>
</dbReference>
<dbReference type="InterPro" id="IPR020810">
    <property type="entry name" value="Enolase_C"/>
</dbReference>
<dbReference type="InterPro" id="IPR020809">
    <property type="entry name" value="Enolase_CS"/>
</dbReference>
<dbReference type="InterPro" id="IPR020811">
    <property type="entry name" value="Enolase_N"/>
</dbReference>
<dbReference type="NCBIfam" id="TIGR01060">
    <property type="entry name" value="eno"/>
    <property type="match status" value="1"/>
</dbReference>
<dbReference type="PANTHER" id="PTHR11902">
    <property type="entry name" value="ENOLASE"/>
    <property type="match status" value="1"/>
</dbReference>
<dbReference type="PANTHER" id="PTHR11902:SF1">
    <property type="entry name" value="ENOLASE"/>
    <property type="match status" value="1"/>
</dbReference>
<dbReference type="Pfam" id="PF00113">
    <property type="entry name" value="Enolase_C"/>
    <property type="match status" value="1"/>
</dbReference>
<dbReference type="Pfam" id="PF03952">
    <property type="entry name" value="Enolase_N"/>
    <property type="match status" value="1"/>
</dbReference>
<dbReference type="PIRSF" id="PIRSF001400">
    <property type="entry name" value="Enolase"/>
    <property type="match status" value="1"/>
</dbReference>
<dbReference type="PRINTS" id="PR00148">
    <property type="entry name" value="ENOLASE"/>
</dbReference>
<dbReference type="SFLD" id="SFLDS00001">
    <property type="entry name" value="Enolase"/>
    <property type="match status" value="1"/>
</dbReference>
<dbReference type="SFLD" id="SFLDF00002">
    <property type="entry name" value="enolase"/>
    <property type="match status" value="1"/>
</dbReference>
<dbReference type="SMART" id="SM01192">
    <property type="entry name" value="Enolase_C"/>
    <property type="match status" value="1"/>
</dbReference>
<dbReference type="SMART" id="SM01193">
    <property type="entry name" value="Enolase_N"/>
    <property type="match status" value="1"/>
</dbReference>
<dbReference type="SUPFAM" id="SSF51604">
    <property type="entry name" value="Enolase C-terminal domain-like"/>
    <property type="match status" value="1"/>
</dbReference>
<dbReference type="SUPFAM" id="SSF54826">
    <property type="entry name" value="Enolase N-terminal domain-like"/>
    <property type="match status" value="1"/>
</dbReference>
<dbReference type="PROSITE" id="PS00164">
    <property type="entry name" value="ENOLASE"/>
    <property type="match status" value="1"/>
</dbReference>
<sequence length="433" mass="47354">MGFRIYEIKARQIIDSRGNPTVEADVILEDGSLGRAAVPSGASTGINEAVELRDGDKSVYMGKGVLKAVENIINIISPELEGMSALNQVEIDRKMLALDGTPNKSKLGANAILAVSMATARAAAEYLGLKVYQYLGAYKANILPTPMCNIINGGAHSDNCVDFQEFMIMPIGAKTFNDAIRMSAEVFHTLKGILSKRGYATSVGDEGGFAPNLKSNEEACEVIMEAIKNAGYTPGTDIAIALDPATSELYDPETKKYVLRWSTKEELTSEEMVEYWAKWVEKYPIISIEDGMAEEDWDGWKKLTDKIGDKVQLVGDDLFVTNTSFLKKGIEMKVANAILIKVNQIGTLTETFEAVEMAKKAGYTAIVSHRSGETEDTTIADLVVALGTGQIKTGSLSRTDRIAKYNQLLRIEEELGSIAEYHGRDVFYSIKKQ</sequence>
<comment type="function">
    <text evidence="1">Catalyzes the reversible conversion of 2-phosphoglycerate (2-PG) into phosphoenolpyruvate (PEP). It is essential for the degradation of carbohydrates via glycolysis.</text>
</comment>
<comment type="catalytic activity">
    <reaction evidence="1">
        <text>(2R)-2-phosphoglycerate = phosphoenolpyruvate + H2O</text>
        <dbReference type="Rhea" id="RHEA:10164"/>
        <dbReference type="ChEBI" id="CHEBI:15377"/>
        <dbReference type="ChEBI" id="CHEBI:58289"/>
        <dbReference type="ChEBI" id="CHEBI:58702"/>
        <dbReference type="EC" id="4.2.1.11"/>
    </reaction>
</comment>
<comment type="cofactor">
    <cofactor evidence="1">
        <name>Mg(2+)</name>
        <dbReference type="ChEBI" id="CHEBI:18420"/>
    </cofactor>
    <text evidence="1">Binds a second Mg(2+) ion via substrate during catalysis.</text>
</comment>
<comment type="pathway">
    <text evidence="1">Carbohydrate degradation; glycolysis; pyruvate from D-glyceraldehyde 3-phosphate: step 4/5.</text>
</comment>
<comment type="subcellular location">
    <subcellularLocation>
        <location evidence="1">Cytoplasm</location>
    </subcellularLocation>
    <subcellularLocation>
        <location evidence="1">Secreted</location>
    </subcellularLocation>
    <subcellularLocation>
        <location evidence="1">Cell surface</location>
    </subcellularLocation>
    <text evidence="1">Fractions of enolase are present in both the cytoplasm and on the cell surface.</text>
</comment>
<comment type="similarity">
    <text evidence="1">Belongs to the enolase family.</text>
</comment>
<proteinExistence type="inferred from homology"/>
<protein>
    <recommendedName>
        <fullName evidence="1">Enolase</fullName>
        <ecNumber evidence="1">4.2.1.11</ecNumber>
    </recommendedName>
    <alternativeName>
        <fullName evidence="1">2-phospho-D-glycerate hydro-lyase</fullName>
    </alternativeName>
    <alternativeName>
        <fullName evidence="1">2-phosphoglycerate dehydratase</fullName>
    </alternativeName>
</protein>
<feature type="chain" id="PRO_1000115832" description="Enolase">
    <location>
        <begin position="1"/>
        <end position="433"/>
    </location>
</feature>
<feature type="active site" description="Proton donor" evidence="1">
    <location>
        <position position="206"/>
    </location>
</feature>
<feature type="active site" description="Proton acceptor" evidence="1">
    <location>
        <position position="341"/>
    </location>
</feature>
<feature type="binding site" evidence="1">
    <location>
        <position position="164"/>
    </location>
    <ligand>
        <name>(2R)-2-phosphoglycerate</name>
        <dbReference type="ChEBI" id="CHEBI:58289"/>
    </ligand>
</feature>
<feature type="binding site" evidence="1">
    <location>
        <position position="243"/>
    </location>
    <ligand>
        <name>Mg(2+)</name>
        <dbReference type="ChEBI" id="CHEBI:18420"/>
    </ligand>
</feature>
<feature type="binding site" evidence="1">
    <location>
        <position position="289"/>
    </location>
    <ligand>
        <name>Mg(2+)</name>
        <dbReference type="ChEBI" id="CHEBI:18420"/>
    </ligand>
</feature>
<feature type="binding site" evidence="1">
    <location>
        <position position="316"/>
    </location>
    <ligand>
        <name>Mg(2+)</name>
        <dbReference type="ChEBI" id="CHEBI:18420"/>
    </ligand>
</feature>
<feature type="binding site" evidence="1">
    <location>
        <position position="341"/>
    </location>
    <ligand>
        <name>(2R)-2-phosphoglycerate</name>
        <dbReference type="ChEBI" id="CHEBI:58289"/>
    </ligand>
</feature>
<feature type="binding site" evidence="1">
    <location>
        <position position="370"/>
    </location>
    <ligand>
        <name>(2R)-2-phosphoglycerate</name>
        <dbReference type="ChEBI" id="CHEBI:58289"/>
    </ligand>
</feature>
<feature type="binding site" evidence="1">
    <location>
        <position position="371"/>
    </location>
    <ligand>
        <name>(2R)-2-phosphoglycerate</name>
        <dbReference type="ChEBI" id="CHEBI:58289"/>
    </ligand>
</feature>
<feature type="binding site" evidence="1">
    <location>
        <position position="392"/>
    </location>
    <ligand>
        <name>(2R)-2-phosphoglycerate</name>
        <dbReference type="ChEBI" id="CHEBI:58289"/>
    </ligand>
</feature>